<accession>A2R989</accession>
<evidence type="ECO:0000250" key="1"/>
<evidence type="ECO:0000255" key="2"/>
<evidence type="ECO:0000255" key="3">
    <source>
        <dbReference type="PROSITE-ProRule" id="PRU01164"/>
    </source>
</evidence>
<evidence type="ECO:0000305" key="4"/>
<name>BGLI_ASPNC</name>
<sequence length="818" mass="90051">MARVDFWHTASIPRLNIPALRMSDGPNGVRGTRFFNGIPAACFPCATALGATWDAHLLHEVGQLMGDESIAKGSHIVLGPTINIQRSPLGGRGFESFAEDGVLSGILAGNYCKGLQEKGVAATLKHFVCNDQEHERLAVSSIVTMRALREIYLLPFQLAMRICPTACVMTAYNKVNGTHVSENKELITDILRKEWNWDGLVMSDWFGTYTTSDAINAGLDLEMPGKTRWRGSALAHAVSSNKVAEFVLDDRVRNILNLVNWVEPLGIPEHAPEKALNRPQDRDLLRRAAAESVVLMKNEDNILPLRKDKPILVIGPNAQIAAYCGGGSASLDPYYTVSPFEGVTAKATSEVQFSQGVYSHKELPLLGPLLKTQDGKPGFTFRVYNEPPSHKDRTLVDELHLLRSSGFLMDYINPKIHSFTFFVDMEGYFTPTESGVYDFGVTVVGTGRLLIDNETVVDNTKNQRQGTAFFGNATVEERGSKHLNAGQTYKVVLEFGSAPTSDLDTRGIVVFGPGGFRFGAARQVSQEELISNAVSQASQASQVIIFAGLTSEWETEGNDREHMDLPPGTDEMISRVLDANPDNTVVCLQSGTPVTMPWVHKAKALVHAWFGGNECGNGIADVLFGDVNPSAKLPVTFPVRLQDNPSYLNFRSERGRVLYGEDVYVGYRYYEKTNVKPLYPFGHGLSYTTFSRSDLKITTSPEKSTLTDGEPITATVQVKNTGTVAGAEIVQLWVLPPKTEVNRPVRELKGFTKVFLQPGEEKQVEIVVEKKLATSWWDEQRGKWASEKGTYGVSVTGTGEEELSGEFGVERTRYWVGL</sequence>
<organism>
    <name type="scientific">Aspergillus niger (strain ATCC MYA-4892 / CBS 513.88 / FGSC A1513)</name>
    <dbReference type="NCBI Taxonomy" id="425011"/>
    <lineage>
        <taxon>Eukaryota</taxon>
        <taxon>Fungi</taxon>
        <taxon>Dikarya</taxon>
        <taxon>Ascomycota</taxon>
        <taxon>Pezizomycotina</taxon>
        <taxon>Eurotiomycetes</taxon>
        <taxon>Eurotiomycetidae</taxon>
        <taxon>Eurotiales</taxon>
        <taxon>Aspergillaceae</taxon>
        <taxon>Aspergillus</taxon>
        <taxon>Aspergillus subgen. Circumdati</taxon>
    </lineage>
</organism>
<gene>
    <name type="primary">bglI</name>
    <name type="ORF">An17g00520</name>
</gene>
<comment type="function">
    <text evidence="1">Beta-glucosidases are one of a number of cellulolytic enzymes involved in the degradation of cellulosic biomass. Catalyzes the last step releasing glucose from the inhibitory cellobiose (By similarity).</text>
</comment>
<comment type="catalytic activity">
    <reaction>
        <text>Hydrolysis of terminal, non-reducing beta-D-glucosyl residues with release of beta-D-glucose.</text>
        <dbReference type="EC" id="3.2.1.21"/>
    </reaction>
</comment>
<comment type="pathway">
    <text>Glycan metabolism; cellulose degradation.</text>
</comment>
<comment type="subcellular location">
    <subcellularLocation>
        <location evidence="1">Secreted</location>
    </subcellularLocation>
</comment>
<comment type="similarity">
    <text evidence="4">Belongs to the glycosyl hydrolase 3 family.</text>
</comment>
<protein>
    <recommendedName>
        <fullName>Probable beta-glucosidase I</fullName>
        <ecNumber>3.2.1.21</ecNumber>
    </recommendedName>
    <alternativeName>
        <fullName>Beta-D-glucoside glucohydrolase I</fullName>
    </alternativeName>
    <alternativeName>
        <fullName>Cellobiase I</fullName>
    </alternativeName>
    <alternativeName>
        <fullName>Gentiobiase I</fullName>
    </alternativeName>
</protein>
<proteinExistence type="inferred from homology"/>
<feature type="chain" id="PRO_0000394887" description="Probable beta-glucosidase I">
    <location>
        <begin position="1"/>
        <end position="818"/>
    </location>
</feature>
<feature type="domain" description="PA14" evidence="3">
    <location>
        <begin position="374"/>
        <end position="534"/>
    </location>
</feature>
<feature type="active site" evidence="1">
    <location>
        <position position="204"/>
    </location>
</feature>
<feature type="glycosylation site" description="N-linked (GlcNAc...) asparagine" evidence="2">
    <location>
        <position position="176"/>
    </location>
</feature>
<feature type="glycosylation site" description="N-linked (GlcNAc...) asparagine" evidence="2">
    <location>
        <position position="453"/>
    </location>
</feature>
<feature type="glycosylation site" description="N-linked (GlcNAc...) asparagine" evidence="2">
    <location>
        <position position="472"/>
    </location>
</feature>
<dbReference type="EC" id="3.2.1.21"/>
<dbReference type="EMBL" id="AM270384">
    <property type="protein sequence ID" value="CAK97412.1"/>
    <property type="molecule type" value="Genomic_DNA"/>
</dbReference>
<dbReference type="SMR" id="A2R989"/>
<dbReference type="CAZy" id="GH3">
    <property type="family name" value="Glycoside Hydrolase Family 3"/>
</dbReference>
<dbReference type="GlyCosmos" id="A2R989">
    <property type="glycosylation" value="3 sites, No reported glycans"/>
</dbReference>
<dbReference type="EnsemblFungi" id="CAK97412">
    <property type="protein sequence ID" value="CAK97412"/>
    <property type="gene ID" value="An17g00520"/>
</dbReference>
<dbReference type="VEuPathDB" id="FungiDB:An17g00520"/>
<dbReference type="HOGENOM" id="CLU_004542_4_0_1"/>
<dbReference type="UniPathway" id="UPA00696"/>
<dbReference type="Proteomes" id="UP000006706">
    <property type="component" value="Chromosome 5L"/>
</dbReference>
<dbReference type="GO" id="GO:0005576">
    <property type="term" value="C:extracellular region"/>
    <property type="evidence" value="ECO:0007669"/>
    <property type="project" value="UniProtKB-SubCell"/>
</dbReference>
<dbReference type="GO" id="GO:0008422">
    <property type="term" value="F:beta-glucosidase activity"/>
    <property type="evidence" value="ECO:0007669"/>
    <property type="project" value="UniProtKB-EC"/>
</dbReference>
<dbReference type="GO" id="GO:0030245">
    <property type="term" value="P:cellulose catabolic process"/>
    <property type="evidence" value="ECO:0007669"/>
    <property type="project" value="UniProtKB-UniPathway"/>
</dbReference>
<dbReference type="FunFam" id="3.20.20.300:FF:000006">
    <property type="entry name" value="Beta-glucosidase H"/>
    <property type="match status" value="1"/>
</dbReference>
<dbReference type="FunFam" id="2.60.40.10:FF:000495">
    <property type="entry name" value="Periplasmic beta-glucosidase"/>
    <property type="match status" value="1"/>
</dbReference>
<dbReference type="FunFam" id="2.60.120.260:FF:000119">
    <property type="entry name" value="Probable beta-glucosidase I"/>
    <property type="match status" value="1"/>
</dbReference>
<dbReference type="Gene3D" id="2.60.120.260">
    <property type="entry name" value="Galactose-binding domain-like"/>
    <property type="match status" value="1"/>
</dbReference>
<dbReference type="Gene3D" id="3.40.50.1700">
    <property type="entry name" value="Glycoside hydrolase family 3 C-terminal domain"/>
    <property type="match status" value="1"/>
</dbReference>
<dbReference type="Gene3D" id="3.20.20.300">
    <property type="entry name" value="Glycoside hydrolase, family 3, N-terminal domain"/>
    <property type="match status" value="1"/>
</dbReference>
<dbReference type="Gene3D" id="2.60.40.10">
    <property type="entry name" value="Immunoglobulins"/>
    <property type="match status" value="1"/>
</dbReference>
<dbReference type="InterPro" id="IPR050288">
    <property type="entry name" value="Cellulose_deg_GH3"/>
</dbReference>
<dbReference type="InterPro" id="IPR026891">
    <property type="entry name" value="Fn3-like"/>
</dbReference>
<dbReference type="InterPro" id="IPR019800">
    <property type="entry name" value="Glyco_hydro_3_AS"/>
</dbReference>
<dbReference type="InterPro" id="IPR002772">
    <property type="entry name" value="Glyco_hydro_3_C"/>
</dbReference>
<dbReference type="InterPro" id="IPR036881">
    <property type="entry name" value="Glyco_hydro_3_C_sf"/>
</dbReference>
<dbReference type="InterPro" id="IPR001764">
    <property type="entry name" value="Glyco_hydro_3_N"/>
</dbReference>
<dbReference type="InterPro" id="IPR036962">
    <property type="entry name" value="Glyco_hydro_3_N_sf"/>
</dbReference>
<dbReference type="InterPro" id="IPR017853">
    <property type="entry name" value="Glycoside_hydrolase_SF"/>
</dbReference>
<dbReference type="InterPro" id="IPR013783">
    <property type="entry name" value="Ig-like_fold"/>
</dbReference>
<dbReference type="InterPro" id="IPR037524">
    <property type="entry name" value="PA14/GLEYA"/>
</dbReference>
<dbReference type="InterPro" id="IPR011658">
    <property type="entry name" value="PA14_dom"/>
</dbReference>
<dbReference type="PANTHER" id="PTHR42715">
    <property type="entry name" value="BETA-GLUCOSIDASE"/>
    <property type="match status" value="1"/>
</dbReference>
<dbReference type="PANTHER" id="PTHR42715:SF27">
    <property type="entry name" value="BETA-GLUCOSIDASE-RELATED"/>
    <property type="match status" value="1"/>
</dbReference>
<dbReference type="Pfam" id="PF14310">
    <property type="entry name" value="Fn3-like"/>
    <property type="match status" value="1"/>
</dbReference>
<dbReference type="Pfam" id="PF00933">
    <property type="entry name" value="Glyco_hydro_3"/>
    <property type="match status" value="1"/>
</dbReference>
<dbReference type="Pfam" id="PF01915">
    <property type="entry name" value="Glyco_hydro_3_C"/>
    <property type="match status" value="1"/>
</dbReference>
<dbReference type="Pfam" id="PF07691">
    <property type="entry name" value="PA14"/>
    <property type="match status" value="1"/>
</dbReference>
<dbReference type="PRINTS" id="PR00133">
    <property type="entry name" value="GLHYDRLASE3"/>
</dbReference>
<dbReference type="SMART" id="SM01217">
    <property type="entry name" value="Fn3_like"/>
    <property type="match status" value="1"/>
</dbReference>
<dbReference type="SMART" id="SM00758">
    <property type="entry name" value="PA14"/>
    <property type="match status" value="1"/>
</dbReference>
<dbReference type="SUPFAM" id="SSF51445">
    <property type="entry name" value="(Trans)glycosidases"/>
    <property type="match status" value="1"/>
</dbReference>
<dbReference type="SUPFAM" id="SSF56988">
    <property type="entry name" value="Anthrax protective antigen"/>
    <property type="match status" value="1"/>
</dbReference>
<dbReference type="SUPFAM" id="SSF52279">
    <property type="entry name" value="Beta-D-glucan exohydrolase, C-terminal domain"/>
    <property type="match status" value="1"/>
</dbReference>
<dbReference type="PROSITE" id="PS00775">
    <property type="entry name" value="GLYCOSYL_HYDROL_F3"/>
    <property type="match status" value="1"/>
</dbReference>
<dbReference type="PROSITE" id="PS51820">
    <property type="entry name" value="PA14"/>
    <property type="match status" value="1"/>
</dbReference>
<reference key="1">
    <citation type="journal article" date="2007" name="Nat. Biotechnol.">
        <title>Genome sequencing and analysis of the versatile cell factory Aspergillus niger CBS 513.88.</title>
        <authorList>
            <person name="Pel H.J."/>
            <person name="de Winde J.H."/>
            <person name="Archer D.B."/>
            <person name="Dyer P.S."/>
            <person name="Hofmann G."/>
            <person name="Schaap P.J."/>
            <person name="Turner G."/>
            <person name="de Vries R.P."/>
            <person name="Albang R."/>
            <person name="Albermann K."/>
            <person name="Andersen M.R."/>
            <person name="Bendtsen J.D."/>
            <person name="Benen J.A.E."/>
            <person name="van den Berg M."/>
            <person name="Breestraat S."/>
            <person name="Caddick M.X."/>
            <person name="Contreras R."/>
            <person name="Cornell M."/>
            <person name="Coutinho P.M."/>
            <person name="Danchin E.G.J."/>
            <person name="Debets A.J.M."/>
            <person name="Dekker P."/>
            <person name="van Dijck P.W.M."/>
            <person name="van Dijk A."/>
            <person name="Dijkhuizen L."/>
            <person name="Driessen A.J.M."/>
            <person name="d'Enfert C."/>
            <person name="Geysens S."/>
            <person name="Goosen C."/>
            <person name="Groot G.S.P."/>
            <person name="de Groot P.W.J."/>
            <person name="Guillemette T."/>
            <person name="Henrissat B."/>
            <person name="Herweijer M."/>
            <person name="van den Hombergh J.P.T.W."/>
            <person name="van den Hondel C.A.M.J.J."/>
            <person name="van der Heijden R.T.J.M."/>
            <person name="van der Kaaij R.M."/>
            <person name="Klis F.M."/>
            <person name="Kools H.J."/>
            <person name="Kubicek C.P."/>
            <person name="van Kuyk P.A."/>
            <person name="Lauber J."/>
            <person name="Lu X."/>
            <person name="van der Maarel M.J.E.C."/>
            <person name="Meulenberg R."/>
            <person name="Menke H."/>
            <person name="Mortimer M.A."/>
            <person name="Nielsen J."/>
            <person name="Oliver S.G."/>
            <person name="Olsthoorn M."/>
            <person name="Pal K."/>
            <person name="van Peij N.N.M.E."/>
            <person name="Ram A.F.J."/>
            <person name="Rinas U."/>
            <person name="Roubos J.A."/>
            <person name="Sagt C.M.J."/>
            <person name="Schmoll M."/>
            <person name="Sun J."/>
            <person name="Ussery D."/>
            <person name="Varga J."/>
            <person name="Vervecken W."/>
            <person name="van de Vondervoort P.J.J."/>
            <person name="Wedler H."/>
            <person name="Woesten H.A.B."/>
            <person name="Zeng A.-P."/>
            <person name="van Ooyen A.J.J."/>
            <person name="Visser J."/>
            <person name="Stam H."/>
        </authorList>
    </citation>
    <scope>NUCLEOTIDE SEQUENCE [LARGE SCALE GENOMIC DNA]</scope>
    <source>
        <strain>ATCC MYA-4892 / CBS 513.88 / FGSC A1513</strain>
    </source>
</reference>
<keyword id="KW-0119">Carbohydrate metabolism</keyword>
<keyword id="KW-0136">Cellulose degradation</keyword>
<keyword id="KW-0325">Glycoprotein</keyword>
<keyword id="KW-0326">Glycosidase</keyword>
<keyword id="KW-0378">Hydrolase</keyword>
<keyword id="KW-0624">Polysaccharide degradation</keyword>
<keyword id="KW-1185">Reference proteome</keyword>
<keyword id="KW-0964">Secreted</keyword>